<reference key="1">
    <citation type="journal article" date="2005" name="PLoS Biol.">
        <title>The genome sequence of Rickettsia felis identifies the first putative conjugative plasmid in an obligate intracellular parasite.</title>
        <authorList>
            <person name="Ogata H."/>
            <person name="Renesto P."/>
            <person name="Audic S."/>
            <person name="Robert C."/>
            <person name="Blanc G."/>
            <person name="Fournier P.-E."/>
            <person name="Parinello H."/>
            <person name="Claverie J.-M."/>
            <person name="Raoult D."/>
        </authorList>
    </citation>
    <scope>NUCLEOTIDE SEQUENCE [LARGE SCALE GENOMIC DNA]</scope>
    <source>
        <strain>ATCC VR-1525 / URRWXCal2</strain>
    </source>
</reference>
<dbReference type="EMBL" id="CP000053">
    <property type="protein sequence ID" value="AAY61459.1"/>
    <property type="molecule type" value="Genomic_DNA"/>
</dbReference>
<dbReference type="SMR" id="Q4ULW4"/>
<dbReference type="STRING" id="315456.RF_0608"/>
<dbReference type="KEGG" id="rfe:RF_0608"/>
<dbReference type="eggNOG" id="COG2211">
    <property type="taxonomic scope" value="Bacteria"/>
</dbReference>
<dbReference type="HOGENOM" id="CLU_029352_1_2_5"/>
<dbReference type="OrthoDB" id="9787815at2"/>
<dbReference type="Proteomes" id="UP000008548">
    <property type="component" value="Chromosome"/>
</dbReference>
<dbReference type="GO" id="GO:0005886">
    <property type="term" value="C:plasma membrane"/>
    <property type="evidence" value="ECO:0007669"/>
    <property type="project" value="UniProtKB-SubCell"/>
</dbReference>
<dbReference type="GO" id="GO:0022857">
    <property type="term" value="F:transmembrane transporter activity"/>
    <property type="evidence" value="ECO:0007669"/>
    <property type="project" value="InterPro"/>
</dbReference>
<dbReference type="CDD" id="cd17486">
    <property type="entry name" value="MFS_AmpG_like"/>
    <property type="match status" value="1"/>
</dbReference>
<dbReference type="Gene3D" id="1.20.1250.20">
    <property type="entry name" value="MFS general substrate transporter like domains"/>
    <property type="match status" value="2"/>
</dbReference>
<dbReference type="InterPro" id="IPR004752">
    <property type="entry name" value="AmpG_permease/AT-1"/>
</dbReference>
<dbReference type="InterPro" id="IPR011701">
    <property type="entry name" value="MFS"/>
</dbReference>
<dbReference type="InterPro" id="IPR020846">
    <property type="entry name" value="MFS_dom"/>
</dbReference>
<dbReference type="InterPro" id="IPR036259">
    <property type="entry name" value="MFS_trans_sf"/>
</dbReference>
<dbReference type="NCBIfam" id="TIGR00901">
    <property type="entry name" value="2A0125"/>
    <property type="match status" value="1"/>
</dbReference>
<dbReference type="PANTHER" id="PTHR12778:SF10">
    <property type="entry name" value="MAJOR FACILITATOR SUPERFAMILY DOMAIN-CONTAINING PROTEIN 3"/>
    <property type="match status" value="1"/>
</dbReference>
<dbReference type="PANTHER" id="PTHR12778">
    <property type="entry name" value="SOLUTE CARRIER FAMILY 33 ACETYL-COA TRANSPORTER -RELATED"/>
    <property type="match status" value="1"/>
</dbReference>
<dbReference type="Pfam" id="PF07690">
    <property type="entry name" value="MFS_1"/>
    <property type="match status" value="1"/>
</dbReference>
<dbReference type="SUPFAM" id="SSF103473">
    <property type="entry name" value="MFS general substrate transporter"/>
    <property type="match status" value="1"/>
</dbReference>
<dbReference type="PROSITE" id="PS50850">
    <property type="entry name" value="MFS"/>
    <property type="match status" value="1"/>
</dbReference>
<accession>Q4ULW4</accession>
<evidence type="ECO:0000250" key="1"/>
<evidence type="ECO:0000255" key="2"/>
<evidence type="ECO:0000305" key="3"/>
<name>AMPG4_RICFE</name>
<proteinExistence type="inferred from homology"/>
<feature type="chain" id="PRO_0000281098" description="Putative transporter AmpG 4">
    <location>
        <begin position="1"/>
        <end position="414"/>
    </location>
</feature>
<feature type="transmembrane region" description="Helical" evidence="2">
    <location>
        <begin position="15"/>
        <end position="35"/>
    </location>
</feature>
<feature type="transmembrane region" description="Helical" evidence="2">
    <location>
        <begin position="44"/>
        <end position="63"/>
    </location>
</feature>
<feature type="transmembrane region" description="Helical" evidence="2">
    <location>
        <begin position="84"/>
        <end position="104"/>
    </location>
</feature>
<feature type="transmembrane region" description="Helical" evidence="2">
    <location>
        <begin position="109"/>
        <end position="129"/>
    </location>
</feature>
<feature type="transmembrane region" description="Helical" evidence="2">
    <location>
        <begin position="150"/>
        <end position="170"/>
    </location>
</feature>
<feature type="transmembrane region" description="Helical" evidence="2">
    <location>
        <begin position="177"/>
        <end position="197"/>
    </location>
</feature>
<feature type="transmembrane region" description="Helical" evidence="2">
    <location>
        <begin position="230"/>
        <end position="250"/>
    </location>
</feature>
<feature type="transmembrane region" description="Helical" evidence="2">
    <location>
        <begin position="268"/>
        <end position="288"/>
    </location>
</feature>
<feature type="transmembrane region" description="Helical" evidence="2">
    <location>
        <begin position="295"/>
        <end position="315"/>
    </location>
</feature>
<feature type="transmembrane region" description="Helical" evidence="2">
    <location>
        <begin position="324"/>
        <end position="344"/>
    </location>
</feature>
<feature type="transmembrane region" description="Helical" evidence="2">
    <location>
        <begin position="360"/>
        <end position="379"/>
    </location>
</feature>
<feature type="transmembrane region" description="Helical" evidence="2">
    <location>
        <begin position="389"/>
        <end position="409"/>
    </location>
</feature>
<gene>
    <name type="primary">ampG4</name>
    <name type="ordered locus">RF_0608</name>
</gene>
<keyword id="KW-0997">Cell inner membrane</keyword>
<keyword id="KW-1003">Cell membrane</keyword>
<keyword id="KW-0472">Membrane</keyword>
<keyword id="KW-0812">Transmembrane</keyword>
<keyword id="KW-1133">Transmembrane helix</keyword>
<keyword id="KW-0813">Transport</keyword>
<protein>
    <recommendedName>
        <fullName>Putative transporter AmpG 4</fullName>
    </recommendedName>
</protein>
<comment type="subcellular location">
    <subcellularLocation>
        <location evidence="1">Cell inner membrane</location>
        <topology evidence="1">Multi-pass membrane protein</topology>
    </subcellularLocation>
</comment>
<comment type="similarity">
    <text evidence="3">Belongs to the major facilitator superfamily.</text>
</comment>
<sequence>MLITKIFKDYRLFEIFILGIVSGMPLVIIFSTLSVWLKESGIDIAVITTFAVARLSYSLKVFWSPLVDNFKIPFLSRWGHRKSWLILCSSLMVLVLIAMSKENPEVSLTSLYFLTIALGFLSSTFDIAVDALRIDKFDQETQTIASATAVFGYRIGMLITGAGALYLAEITGNNWQLTFVIIAIIFAVATIFIITVNEKELVREKVNITSIISWIYAVINPFKDFFKREFAVTILLAVIFFKLGDAMLGAVASPFYIELGYTKGEIAIIAKLYGLIATLVGGFAGGIVMYKVGNFKGLIITGIAQSLTHFAFIWLNHQPPSFEALLIAITIENFAAAMGATALVGYIGNLCNKKYSATQYALLSSSSSLCNNTVTIYAGKLVNMMGWDGFFIFTIILALPALFILMYLNKKVNV</sequence>
<organism>
    <name type="scientific">Rickettsia felis (strain ATCC VR-1525 / URRWXCal2)</name>
    <name type="common">Rickettsia azadi</name>
    <dbReference type="NCBI Taxonomy" id="315456"/>
    <lineage>
        <taxon>Bacteria</taxon>
        <taxon>Pseudomonadati</taxon>
        <taxon>Pseudomonadota</taxon>
        <taxon>Alphaproteobacteria</taxon>
        <taxon>Rickettsiales</taxon>
        <taxon>Rickettsiaceae</taxon>
        <taxon>Rickettsieae</taxon>
        <taxon>Rickettsia</taxon>
        <taxon>spotted fever group</taxon>
    </lineage>
</organism>